<comment type="function">
    <text evidence="1">Converts N-acetylmannosamine-6-phosphate (ManNAc-6-P) to N-acetylglucosamine-6-phosphate (GlcNAc-6-P).</text>
</comment>
<comment type="catalytic activity">
    <reaction evidence="1">
        <text>an N-acyl-D-glucosamine 6-phosphate = an N-acyl-D-mannosamine 6-phosphate</text>
        <dbReference type="Rhea" id="RHEA:23932"/>
        <dbReference type="ChEBI" id="CHEBI:57599"/>
        <dbReference type="ChEBI" id="CHEBI:57666"/>
        <dbReference type="EC" id="5.1.3.9"/>
    </reaction>
</comment>
<comment type="pathway">
    <text evidence="1">Amino-sugar metabolism; N-acetylneuraminate degradation; D-fructose 6-phosphate from N-acetylneuraminate: step 3/5.</text>
</comment>
<comment type="similarity">
    <text evidence="1">Belongs to the NanE family.</text>
</comment>
<accession>B5XJP1</accession>
<dbReference type="EC" id="5.1.3.9" evidence="1"/>
<dbReference type="EMBL" id="CP000829">
    <property type="protein sequence ID" value="ACI60553.1"/>
    <property type="molecule type" value="Genomic_DNA"/>
</dbReference>
<dbReference type="SMR" id="B5XJP1"/>
<dbReference type="KEGG" id="soz:Spy49_0211"/>
<dbReference type="HOGENOM" id="CLU_086300_1_0_9"/>
<dbReference type="UniPathway" id="UPA00629">
    <property type="reaction ID" value="UER00682"/>
</dbReference>
<dbReference type="Proteomes" id="UP000001039">
    <property type="component" value="Chromosome"/>
</dbReference>
<dbReference type="GO" id="GO:0005829">
    <property type="term" value="C:cytosol"/>
    <property type="evidence" value="ECO:0007669"/>
    <property type="project" value="TreeGrafter"/>
</dbReference>
<dbReference type="GO" id="GO:0047465">
    <property type="term" value="F:N-acylglucosamine-6-phosphate 2-epimerase activity"/>
    <property type="evidence" value="ECO:0007669"/>
    <property type="project" value="UniProtKB-EC"/>
</dbReference>
<dbReference type="GO" id="GO:0005975">
    <property type="term" value="P:carbohydrate metabolic process"/>
    <property type="evidence" value="ECO:0007669"/>
    <property type="project" value="UniProtKB-UniRule"/>
</dbReference>
<dbReference type="GO" id="GO:0006053">
    <property type="term" value="P:N-acetylmannosamine catabolic process"/>
    <property type="evidence" value="ECO:0007669"/>
    <property type="project" value="TreeGrafter"/>
</dbReference>
<dbReference type="GO" id="GO:0019262">
    <property type="term" value="P:N-acetylneuraminate catabolic process"/>
    <property type="evidence" value="ECO:0007669"/>
    <property type="project" value="UniProtKB-UniRule"/>
</dbReference>
<dbReference type="CDD" id="cd04729">
    <property type="entry name" value="NanE"/>
    <property type="match status" value="1"/>
</dbReference>
<dbReference type="FunFam" id="3.20.20.70:FF:000035">
    <property type="entry name" value="Putative N-acetylmannosamine-6-phosphate 2-epimerase"/>
    <property type="match status" value="1"/>
</dbReference>
<dbReference type="Gene3D" id="3.20.20.70">
    <property type="entry name" value="Aldolase class I"/>
    <property type="match status" value="1"/>
</dbReference>
<dbReference type="HAMAP" id="MF_01235">
    <property type="entry name" value="ManNAc6P_epimer"/>
    <property type="match status" value="1"/>
</dbReference>
<dbReference type="InterPro" id="IPR013785">
    <property type="entry name" value="Aldolase_TIM"/>
</dbReference>
<dbReference type="InterPro" id="IPR007260">
    <property type="entry name" value="NanE"/>
</dbReference>
<dbReference type="InterPro" id="IPR011060">
    <property type="entry name" value="RibuloseP-bd_barrel"/>
</dbReference>
<dbReference type="NCBIfam" id="NF002231">
    <property type="entry name" value="PRK01130.1"/>
    <property type="match status" value="1"/>
</dbReference>
<dbReference type="PANTHER" id="PTHR36204">
    <property type="entry name" value="N-ACETYLMANNOSAMINE-6-PHOSPHATE 2-EPIMERASE-RELATED"/>
    <property type="match status" value="1"/>
</dbReference>
<dbReference type="PANTHER" id="PTHR36204:SF1">
    <property type="entry name" value="N-ACETYLMANNOSAMINE-6-PHOSPHATE 2-EPIMERASE-RELATED"/>
    <property type="match status" value="1"/>
</dbReference>
<dbReference type="Pfam" id="PF04131">
    <property type="entry name" value="NanE"/>
    <property type="match status" value="1"/>
</dbReference>
<dbReference type="SUPFAM" id="SSF51366">
    <property type="entry name" value="Ribulose-phoshate binding barrel"/>
    <property type="match status" value="1"/>
</dbReference>
<evidence type="ECO:0000255" key="1">
    <source>
        <dbReference type="HAMAP-Rule" id="MF_01235"/>
    </source>
</evidence>
<proteinExistence type="inferred from homology"/>
<gene>
    <name evidence="1" type="primary">nanE</name>
    <name type="ordered locus">Spy49_0211</name>
</gene>
<feature type="chain" id="PRO_1000139716" description="Putative N-acetylmannosamine-6-phosphate 2-epimerase">
    <location>
        <begin position="1"/>
        <end position="234"/>
    </location>
</feature>
<organism>
    <name type="scientific">Streptococcus pyogenes serotype M49 (strain NZ131)</name>
    <dbReference type="NCBI Taxonomy" id="471876"/>
    <lineage>
        <taxon>Bacteria</taxon>
        <taxon>Bacillati</taxon>
        <taxon>Bacillota</taxon>
        <taxon>Bacilli</taxon>
        <taxon>Lactobacillales</taxon>
        <taxon>Streptococcaceae</taxon>
        <taxon>Streptococcus</taxon>
    </lineage>
</organism>
<name>NANE_STRPZ</name>
<sequence>MPDKPTKEKLMEQLKGGIIVSCQALPGEPLYSETGGVMPLLAKAAQEAGAVGIRANSVRDIKEIQAITDLPIIGIIKKDYPPQEPFITATMTEVDQLAALNIAVIAMDCTKRDRYDGLDIASFIRQVKEKYPNQLLMADISTFDEGLVAHQAGIDFVGTTLSGYTPYSRQEAGPDMALIEALCKAGVAVIAEGKIHSPEEAKKINDLGVAGIVVGGAITRPKEIAERFIEALKS</sequence>
<keyword id="KW-0119">Carbohydrate metabolism</keyword>
<keyword id="KW-0413">Isomerase</keyword>
<reference key="1">
    <citation type="journal article" date="2008" name="J. Bacteriol.">
        <title>Genome sequence of a nephritogenic and highly transformable M49 strain of Streptococcus pyogenes.</title>
        <authorList>
            <person name="McShan W.M."/>
            <person name="Ferretti J.J."/>
            <person name="Karasawa T."/>
            <person name="Suvorov A.N."/>
            <person name="Lin S."/>
            <person name="Qin B."/>
            <person name="Jia H."/>
            <person name="Kenton S."/>
            <person name="Najar F."/>
            <person name="Wu H."/>
            <person name="Scott J."/>
            <person name="Roe B.A."/>
            <person name="Savic D.J."/>
        </authorList>
    </citation>
    <scope>NUCLEOTIDE SEQUENCE [LARGE SCALE GENOMIC DNA]</scope>
    <source>
        <strain>NZ131</strain>
    </source>
</reference>
<protein>
    <recommendedName>
        <fullName evidence="1">Putative N-acetylmannosamine-6-phosphate 2-epimerase</fullName>
        <ecNumber evidence="1">5.1.3.9</ecNumber>
    </recommendedName>
    <alternativeName>
        <fullName evidence="1">ManNAc-6-P epimerase</fullName>
    </alternativeName>
</protein>